<gene>
    <name evidence="1" type="primary">hemA</name>
    <name type="ordered locus">Mlut_15240</name>
</gene>
<accession>C5CB93</accession>
<dbReference type="EC" id="1.2.1.70" evidence="1"/>
<dbReference type="EMBL" id="CP001628">
    <property type="protein sequence ID" value="ACS31016.1"/>
    <property type="molecule type" value="Genomic_DNA"/>
</dbReference>
<dbReference type="RefSeq" id="WP_010080565.1">
    <property type="nucleotide sequence ID" value="NC_012803.1"/>
</dbReference>
<dbReference type="SMR" id="C5CB93"/>
<dbReference type="STRING" id="465515.Mlut_15240"/>
<dbReference type="EnsemblBacteria" id="ACS31016">
    <property type="protein sequence ID" value="ACS31016"/>
    <property type="gene ID" value="Mlut_15240"/>
</dbReference>
<dbReference type="GeneID" id="93343395"/>
<dbReference type="KEGG" id="mlu:Mlut_15240"/>
<dbReference type="PATRIC" id="fig|465515.4.peg.1460"/>
<dbReference type="eggNOG" id="COG0373">
    <property type="taxonomic scope" value="Bacteria"/>
</dbReference>
<dbReference type="HOGENOM" id="CLU_035113_4_1_11"/>
<dbReference type="UniPathway" id="UPA00251">
    <property type="reaction ID" value="UER00316"/>
</dbReference>
<dbReference type="Proteomes" id="UP000000738">
    <property type="component" value="Chromosome"/>
</dbReference>
<dbReference type="GO" id="GO:0008883">
    <property type="term" value="F:glutamyl-tRNA reductase activity"/>
    <property type="evidence" value="ECO:0007669"/>
    <property type="project" value="UniProtKB-UniRule"/>
</dbReference>
<dbReference type="GO" id="GO:0050661">
    <property type="term" value="F:NADP binding"/>
    <property type="evidence" value="ECO:0007669"/>
    <property type="project" value="InterPro"/>
</dbReference>
<dbReference type="GO" id="GO:0019353">
    <property type="term" value="P:protoporphyrinogen IX biosynthetic process from glutamate"/>
    <property type="evidence" value="ECO:0007669"/>
    <property type="project" value="TreeGrafter"/>
</dbReference>
<dbReference type="Gene3D" id="3.30.460.30">
    <property type="entry name" value="Glutamyl-tRNA reductase, N-terminal domain"/>
    <property type="match status" value="1"/>
</dbReference>
<dbReference type="Gene3D" id="3.40.50.720">
    <property type="entry name" value="NAD(P)-binding Rossmann-like Domain"/>
    <property type="match status" value="1"/>
</dbReference>
<dbReference type="HAMAP" id="MF_00087">
    <property type="entry name" value="Glu_tRNA_reductase"/>
    <property type="match status" value="1"/>
</dbReference>
<dbReference type="InterPro" id="IPR000343">
    <property type="entry name" value="4pyrrol_synth_GluRdtase"/>
</dbReference>
<dbReference type="InterPro" id="IPR015896">
    <property type="entry name" value="4pyrrol_synth_GluRdtase_dimer"/>
</dbReference>
<dbReference type="InterPro" id="IPR015895">
    <property type="entry name" value="4pyrrol_synth_GluRdtase_N"/>
</dbReference>
<dbReference type="InterPro" id="IPR036453">
    <property type="entry name" value="GluRdtase_dimer_dom_sf"/>
</dbReference>
<dbReference type="InterPro" id="IPR036343">
    <property type="entry name" value="GluRdtase_N_sf"/>
</dbReference>
<dbReference type="InterPro" id="IPR036291">
    <property type="entry name" value="NAD(P)-bd_dom_sf"/>
</dbReference>
<dbReference type="InterPro" id="IPR006151">
    <property type="entry name" value="Shikm_DH/Glu-tRNA_Rdtase"/>
</dbReference>
<dbReference type="NCBIfam" id="NF000750">
    <property type="entry name" value="PRK00045.3-4"/>
    <property type="match status" value="1"/>
</dbReference>
<dbReference type="PANTHER" id="PTHR43013">
    <property type="entry name" value="GLUTAMYL-TRNA REDUCTASE"/>
    <property type="match status" value="1"/>
</dbReference>
<dbReference type="PANTHER" id="PTHR43013:SF1">
    <property type="entry name" value="GLUTAMYL-TRNA REDUCTASE"/>
    <property type="match status" value="1"/>
</dbReference>
<dbReference type="Pfam" id="PF00745">
    <property type="entry name" value="GlutR_dimer"/>
    <property type="match status" value="1"/>
</dbReference>
<dbReference type="Pfam" id="PF05201">
    <property type="entry name" value="GlutR_N"/>
    <property type="match status" value="1"/>
</dbReference>
<dbReference type="Pfam" id="PF01488">
    <property type="entry name" value="Shikimate_DH"/>
    <property type="match status" value="1"/>
</dbReference>
<dbReference type="PIRSF" id="PIRSF000445">
    <property type="entry name" value="4pyrrol_synth_GluRdtase"/>
    <property type="match status" value="1"/>
</dbReference>
<dbReference type="SUPFAM" id="SSF69742">
    <property type="entry name" value="Glutamyl tRNA-reductase catalytic, N-terminal domain"/>
    <property type="match status" value="1"/>
</dbReference>
<dbReference type="SUPFAM" id="SSF69075">
    <property type="entry name" value="Glutamyl tRNA-reductase dimerization domain"/>
    <property type="match status" value="1"/>
</dbReference>
<dbReference type="SUPFAM" id="SSF51735">
    <property type="entry name" value="NAD(P)-binding Rossmann-fold domains"/>
    <property type="match status" value="1"/>
</dbReference>
<keyword id="KW-0521">NADP</keyword>
<keyword id="KW-0560">Oxidoreductase</keyword>
<keyword id="KW-0627">Porphyrin biosynthesis</keyword>
<keyword id="KW-1185">Reference proteome</keyword>
<organism>
    <name type="scientific">Micrococcus luteus (strain ATCC 4698 / DSM 20030 / JCM 1464 / CCM 169 / CCUG 5858 / IAM 1056 / NBRC 3333 / NCIMB 9278 / NCTC 2665 / VKM Ac-2230)</name>
    <name type="common">Micrococcus lysodeikticus</name>
    <dbReference type="NCBI Taxonomy" id="465515"/>
    <lineage>
        <taxon>Bacteria</taxon>
        <taxon>Bacillati</taxon>
        <taxon>Actinomycetota</taxon>
        <taxon>Actinomycetes</taxon>
        <taxon>Micrococcales</taxon>
        <taxon>Micrococcaceae</taxon>
        <taxon>Micrococcus</taxon>
    </lineage>
</organism>
<proteinExistence type="inferred from homology"/>
<reference key="1">
    <citation type="journal article" date="2010" name="J. Bacteriol.">
        <title>Genome sequence of the Fleming strain of Micrococcus luteus, a simple free-living actinobacterium.</title>
        <authorList>
            <person name="Young M."/>
            <person name="Artsatbanov V."/>
            <person name="Beller H.R."/>
            <person name="Chandra G."/>
            <person name="Chater K.F."/>
            <person name="Dover L.G."/>
            <person name="Goh E.B."/>
            <person name="Kahan T."/>
            <person name="Kaprelyants A.S."/>
            <person name="Kyrpides N."/>
            <person name="Lapidus A."/>
            <person name="Lowry S.R."/>
            <person name="Lykidis A."/>
            <person name="Mahillon J."/>
            <person name="Markowitz V."/>
            <person name="Mavromatis K."/>
            <person name="Mukamolova G.V."/>
            <person name="Oren A."/>
            <person name="Rokem J.S."/>
            <person name="Smith M.C."/>
            <person name="Young D.I."/>
            <person name="Greenblatt C.L."/>
        </authorList>
    </citation>
    <scope>NUCLEOTIDE SEQUENCE [LARGE SCALE GENOMIC DNA]</scope>
    <source>
        <strain>ATCC 4698 / DSM 20030 / JCM 1464 / CCM 169 / CCUG 5858 / IAM 1056 / NBRC 3333 / NCIMB 9278 / NCTC 2665 / VKM Ac-2230</strain>
    </source>
</reference>
<sequence>MTVFSLVASHHDLDLDTVARLSAGATGVGPALPGSGAAGAVVLATCNRVEIYAEADGAGVEAARAGLLSAVAASTSLPDEDVHAAFRTLDADATARHLFEVGVGLDSAVVGEREIAGQVRRALTAAQEAGTASGPLVRLFESATRTAKDVGSHTALGAAGRSVVSVALDLAEELRGLTDAAAQRDFWAGATILLIGTGAYAGTTLAQLADRGATTVGVHSASGRAEQFVADRGGWALALGGEAVAGAVAEADVIIGSSGGERQISPERLQELREGGRRPLTVVDLALSRDFDPAVADLPDVDLITLESVRLAAPEQAQVAVAEARALVDDAVEEYRAAQRGRSADAAIKALRRHTLGVLDRELERVRARHGCTAAAEEVEFALRRMVNQLLHEPSVRAKRLAAEGRLDRYEDALEAVFGIEAPGRPASEVGTVEAACPAHEDEGGAARIA</sequence>
<name>HEM1_MICLC</name>
<evidence type="ECO:0000255" key="1">
    <source>
        <dbReference type="HAMAP-Rule" id="MF_00087"/>
    </source>
</evidence>
<comment type="function">
    <text evidence="1">Catalyzes the NADPH-dependent reduction of glutamyl-tRNA(Glu) to glutamate 1-semialdehyde (GSA).</text>
</comment>
<comment type="catalytic activity">
    <reaction evidence="1">
        <text>(S)-4-amino-5-oxopentanoate + tRNA(Glu) + NADP(+) = L-glutamyl-tRNA(Glu) + NADPH + H(+)</text>
        <dbReference type="Rhea" id="RHEA:12344"/>
        <dbReference type="Rhea" id="RHEA-COMP:9663"/>
        <dbReference type="Rhea" id="RHEA-COMP:9680"/>
        <dbReference type="ChEBI" id="CHEBI:15378"/>
        <dbReference type="ChEBI" id="CHEBI:57501"/>
        <dbReference type="ChEBI" id="CHEBI:57783"/>
        <dbReference type="ChEBI" id="CHEBI:58349"/>
        <dbReference type="ChEBI" id="CHEBI:78442"/>
        <dbReference type="ChEBI" id="CHEBI:78520"/>
        <dbReference type="EC" id="1.2.1.70"/>
    </reaction>
</comment>
<comment type="pathway">
    <text evidence="1">Porphyrin-containing compound metabolism; protoporphyrin-IX biosynthesis; 5-aminolevulinate from L-glutamyl-tRNA(Glu): step 1/2.</text>
</comment>
<comment type="subunit">
    <text evidence="1">Homodimer.</text>
</comment>
<comment type="domain">
    <text evidence="1">Possesses an unusual extended V-shaped dimeric structure with each monomer consisting of three distinct domains arranged along a curved 'spinal' alpha-helix. The N-terminal catalytic domain specifically recognizes the glutamate moiety of the substrate. The second domain is the NADPH-binding domain, and the third C-terminal domain is responsible for dimerization.</text>
</comment>
<comment type="miscellaneous">
    <text evidence="1">During catalysis, the active site Cys acts as a nucleophile attacking the alpha-carbonyl group of tRNA-bound glutamate with the formation of a thioester intermediate between enzyme and glutamate, and the concomitant release of tRNA(Glu). The thioester intermediate is finally reduced by direct hydride transfer from NADPH, to form the product GSA.</text>
</comment>
<comment type="similarity">
    <text evidence="1">Belongs to the glutamyl-tRNA reductase family.</text>
</comment>
<feature type="chain" id="PRO_1000202638" description="Glutamyl-tRNA reductase">
    <location>
        <begin position="1"/>
        <end position="450"/>
    </location>
</feature>
<feature type="active site" description="Nucleophile" evidence="1">
    <location>
        <position position="46"/>
    </location>
</feature>
<feature type="binding site" evidence="1">
    <location>
        <begin position="45"/>
        <end position="48"/>
    </location>
    <ligand>
        <name>substrate</name>
    </ligand>
</feature>
<feature type="binding site" evidence="1">
    <location>
        <position position="107"/>
    </location>
    <ligand>
        <name>substrate</name>
    </ligand>
</feature>
<feature type="binding site" evidence="1">
    <location>
        <begin position="112"/>
        <end position="114"/>
    </location>
    <ligand>
        <name>substrate</name>
    </ligand>
</feature>
<feature type="binding site" evidence="1">
    <location>
        <position position="118"/>
    </location>
    <ligand>
        <name>substrate</name>
    </ligand>
</feature>
<feature type="binding site" evidence="1">
    <location>
        <begin position="196"/>
        <end position="201"/>
    </location>
    <ligand>
        <name>NADP(+)</name>
        <dbReference type="ChEBI" id="CHEBI:58349"/>
    </ligand>
</feature>
<feature type="site" description="Important for activity" evidence="1">
    <location>
        <position position="97"/>
    </location>
</feature>
<protein>
    <recommendedName>
        <fullName evidence="1">Glutamyl-tRNA reductase</fullName>
        <shortName evidence="1">GluTR</shortName>
        <ecNumber evidence="1">1.2.1.70</ecNumber>
    </recommendedName>
</protein>